<dbReference type="EMBL" id="AP009552">
    <property type="protein sequence ID" value="BAG48297.1"/>
    <property type="molecule type" value="Genomic_DNA"/>
</dbReference>
<dbReference type="RefSeq" id="WP_002736858.1">
    <property type="nucleotide sequence ID" value="NC_010296.1"/>
</dbReference>
<dbReference type="SMR" id="B3DFB2"/>
<dbReference type="STRING" id="449447.MAE_57595"/>
<dbReference type="PaxDb" id="449447-MAE_57595"/>
<dbReference type="EnsemblBacteria" id="BAG48297">
    <property type="protein sequence ID" value="BAG48297"/>
    <property type="gene ID" value="MAE_57595"/>
</dbReference>
<dbReference type="GeneID" id="66705490"/>
<dbReference type="KEGG" id="mar:MAE_57595"/>
<dbReference type="eggNOG" id="COG0228">
    <property type="taxonomic scope" value="Bacteria"/>
</dbReference>
<dbReference type="HOGENOM" id="CLU_100590_5_2_3"/>
<dbReference type="BioCyc" id="MAER449447:MAE_RS25090-MONOMER"/>
<dbReference type="Proteomes" id="UP000001510">
    <property type="component" value="Chromosome"/>
</dbReference>
<dbReference type="GO" id="GO:0005737">
    <property type="term" value="C:cytoplasm"/>
    <property type="evidence" value="ECO:0007669"/>
    <property type="project" value="UniProtKB-ARBA"/>
</dbReference>
<dbReference type="GO" id="GO:0015935">
    <property type="term" value="C:small ribosomal subunit"/>
    <property type="evidence" value="ECO:0007669"/>
    <property type="project" value="TreeGrafter"/>
</dbReference>
<dbReference type="GO" id="GO:0003735">
    <property type="term" value="F:structural constituent of ribosome"/>
    <property type="evidence" value="ECO:0007669"/>
    <property type="project" value="InterPro"/>
</dbReference>
<dbReference type="GO" id="GO:0006412">
    <property type="term" value="P:translation"/>
    <property type="evidence" value="ECO:0007669"/>
    <property type="project" value="UniProtKB-UniRule"/>
</dbReference>
<dbReference type="Gene3D" id="3.30.1320.10">
    <property type="match status" value="1"/>
</dbReference>
<dbReference type="HAMAP" id="MF_00385">
    <property type="entry name" value="Ribosomal_bS16"/>
    <property type="match status" value="1"/>
</dbReference>
<dbReference type="InterPro" id="IPR000307">
    <property type="entry name" value="Ribosomal_bS16"/>
</dbReference>
<dbReference type="InterPro" id="IPR020592">
    <property type="entry name" value="Ribosomal_bS16_CS"/>
</dbReference>
<dbReference type="InterPro" id="IPR023803">
    <property type="entry name" value="Ribosomal_bS16_dom_sf"/>
</dbReference>
<dbReference type="NCBIfam" id="TIGR00002">
    <property type="entry name" value="S16"/>
    <property type="match status" value="1"/>
</dbReference>
<dbReference type="PANTHER" id="PTHR12919">
    <property type="entry name" value="30S RIBOSOMAL PROTEIN S16"/>
    <property type="match status" value="1"/>
</dbReference>
<dbReference type="PANTHER" id="PTHR12919:SF20">
    <property type="entry name" value="SMALL RIBOSOMAL SUBUNIT PROTEIN BS16M"/>
    <property type="match status" value="1"/>
</dbReference>
<dbReference type="Pfam" id="PF00886">
    <property type="entry name" value="Ribosomal_S16"/>
    <property type="match status" value="1"/>
</dbReference>
<dbReference type="SUPFAM" id="SSF54565">
    <property type="entry name" value="Ribosomal protein S16"/>
    <property type="match status" value="1"/>
</dbReference>
<dbReference type="PROSITE" id="PS00732">
    <property type="entry name" value="RIBOSOMAL_S16"/>
    <property type="match status" value="1"/>
</dbReference>
<name>RS16_MICAN</name>
<evidence type="ECO:0000255" key="1">
    <source>
        <dbReference type="HAMAP-Rule" id="MF_00385"/>
    </source>
</evidence>
<evidence type="ECO:0000305" key="2"/>
<reference key="1">
    <citation type="journal article" date="2007" name="DNA Res.">
        <title>Complete genomic structure of the bloom-forming toxic cyanobacterium Microcystis aeruginosa NIES-843.</title>
        <authorList>
            <person name="Kaneko T."/>
            <person name="Nakajima N."/>
            <person name="Okamoto S."/>
            <person name="Suzuki I."/>
            <person name="Tanabe Y."/>
            <person name="Tamaoki M."/>
            <person name="Nakamura Y."/>
            <person name="Kasai F."/>
            <person name="Watanabe A."/>
            <person name="Kawashima K."/>
            <person name="Kishida Y."/>
            <person name="Ono A."/>
            <person name="Shimizu Y."/>
            <person name="Takahashi C."/>
            <person name="Minami C."/>
            <person name="Fujishiro T."/>
            <person name="Kohara M."/>
            <person name="Katoh M."/>
            <person name="Nakazaki N."/>
            <person name="Nakayama S."/>
            <person name="Yamada M."/>
            <person name="Tabata S."/>
            <person name="Watanabe M.M."/>
        </authorList>
    </citation>
    <scope>NUCLEOTIDE SEQUENCE [LARGE SCALE GENOMIC DNA]</scope>
    <source>
        <strain>NIES-843 / IAM M-247</strain>
    </source>
</reference>
<keyword id="KW-0687">Ribonucleoprotein</keyword>
<keyword id="KW-0689">Ribosomal protein</keyword>
<proteinExistence type="inferred from homology"/>
<organism>
    <name type="scientific">Microcystis aeruginosa (strain NIES-843 / IAM M-2473)</name>
    <dbReference type="NCBI Taxonomy" id="449447"/>
    <lineage>
        <taxon>Bacteria</taxon>
        <taxon>Bacillati</taxon>
        <taxon>Cyanobacteriota</taxon>
        <taxon>Cyanophyceae</taxon>
        <taxon>Oscillatoriophycideae</taxon>
        <taxon>Chroococcales</taxon>
        <taxon>Microcystaceae</taxon>
        <taxon>Microcystis</taxon>
    </lineage>
</organism>
<sequence>MIKLRLKRFGKKREASYRIVAAVSTSRRDGRPLEELGFYNPRTDEVRLDEEGIIRRLQQGAQPTDTVRSILTKQKIFEKINA</sequence>
<protein>
    <recommendedName>
        <fullName evidence="1">Small ribosomal subunit protein bS16</fullName>
    </recommendedName>
    <alternativeName>
        <fullName evidence="2">30S ribosomal protein S16</fullName>
    </alternativeName>
</protein>
<gene>
    <name evidence="1" type="primary">rpsP</name>
    <name evidence="1" type="synonym">rps16</name>
    <name type="ordered locus">MAE_57595</name>
</gene>
<feature type="chain" id="PRO_1000196438" description="Small ribosomal subunit protein bS16">
    <location>
        <begin position="1"/>
        <end position="82"/>
    </location>
</feature>
<comment type="similarity">
    <text evidence="1">Belongs to the bacterial ribosomal protein bS16 family.</text>
</comment>
<accession>B3DFB2</accession>